<sequence length="101" mass="12005">MDKSKRLFLKSKRSFRRRLPPIQSGDRIDYRNISLISRFISQQGKILSRRVNRLTLKQQRLITIAIKQARILSLLPFRPKAQRFKRSQSTARTVGLRTRNK</sequence>
<gene>
    <name evidence="1" type="primary">rps18</name>
</gene>
<keyword id="KW-0150">Chloroplast</keyword>
<keyword id="KW-0934">Plastid</keyword>
<keyword id="KW-0687">Ribonucleoprotein</keyword>
<keyword id="KW-0689">Ribosomal protein</keyword>
<keyword id="KW-0694">RNA-binding</keyword>
<keyword id="KW-0699">rRNA-binding</keyword>
<evidence type="ECO:0000255" key="1">
    <source>
        <dbReference type="HAMAP-Rule" id="MF_00270"/>
    </source>
</evidence>
<evidence type="ECO:0000305" key="2"/>
<organism>
    <name type="scientific">Oenothera elata subsp. hookeri</name>
    <name type="common">Hooker's evening primrose</name>
    <name type="synonym">Oenothera hookeri</name>
    <dbReference type="NCBI Taxonomy" id="85636"/>
    <lineage>
        <taxon>Eukaryota</taxon>
        <taxon>Viridiplantae</taxon>
        <taxon>Streptophyta</taxon>
        <taxon>Embryophyta</taxon>
        <taxon>Tracheophyta</taxon>
        <taxon>Spermatophyta</taxon>
        <taxon>Magnoliopsida</taxon>
        <taxon>eudicotyledons</taxon>
        <taxon>Gunneridae</taxon>
        <taxon>Pentapetalae</taxon>
        <taxon>rosids</taxon>
        <taxon>malvids</taxon>
        <taxon>Myrtales</taxon>
        <taxon>Onagraceae</taxon>
        <taxon>Onagroideae</taxon>
        <taxon>Onagreae</taxon>
        <taxon>Oenothera</taxon>
    </lineage>
</organism>
<accession>Q9MTK1</accession>
<dbReference type="EMBL" id="AJ271079">
    <property type="protein sequence ID" value="CAB67179.2"/>
    <property type="molecule type" value="Genomic_DNA"/>
</dbReference>
<dbReference type="RefSeq" id="NP_084714.2">
    <property type="nucleotide sequence ID" value="NC_002693.2"/>
</dbReference>
<dbReference type="SMR" id="Q9MTK1"/>
<dbReference type="GeneID" id="802757"/>
<dbReference type="GO" id="GO:0009507">
    <property type="term" value="C:chloroplast"/>
    <property type="evidence" value="ECO:0007669"/>
    <property type="project" value="UniProtKB-SubCell"/>
</dbReference>
<dbReference type="GO" id="GO:0005763">
    <property type="term" value="C:mitochondrial small ribosomal subunit"/>
    <property type="evidence" value="ECO:0007669"/>
    <property type="project" value="TreeGrafter"/>
</dbReference>
<dbReference type="GO" id="GO:0070181">
    <property type="term" value="F:small ribosomal subunit rRNA binding"/>
    <property type="evidence" value="ECO:0007669"/>
    <property type="project" value="TreeGrafter"/>
</dbReference>
<dbReference type="GO" id="GO:0003735">
    <property type="term" value="F:structural constituent of ribosome"/>
    <property type="evidence" value="ECO:0007669"/>
    <property type="project" value="InterPro"/>
</dbReference>
<dbReference type="GO" id="GO:0006412">
    <property type="term" value="P:translation"/>
    <property type="evidence" value="ECO:0007669"/>
    <property type="project" value="UniProtKB-UniRule"/>
</dbReference>
<dbReference type="FunFam" id="4.10.640.10:FF:000002">
    <property type="entry name" value="30S ribosomal protein S18, chloroplastic"/>
    <property type="match status" value="1"/>
</dbReference>
<dbReference type="Gene3D" id="4.10.640.10">
    <property type="entry name" value="Ribosomal protein S18"/>
    <property type="match status" value="1"/>
</dbReference>
<dbReference type="HAMAP" id="MF_00270">
    <property type="entry name" value="Ribosomal_bS18"/>
    <property type="match status" value="1"/>
</dbReference>
<dbReference type="InterPro" id="IPR001648">
    <property type="entry name" value="Ribosomal_bS18"/>
</dbReference>
<dbReference type="InterPro" id="IPR036870">
    <property type="entry name" value="Ribosomal_bS18_sf"/>
</dbReference>
<dbReference type="NCBIfam" id="TIGR00165">
    <property type="entry name" value="S18"/>
    <property type="match status" value="1"/>
</dbReference>
<dbReference type="PANTHER" id="PTHR13479">
    <property type="entry name" value="30S RIBOSOMAL PROTEIN S18"/>
    <property type="match status" value="1"/>
</dbReference>
<dbReference type="PANTHER" id="PTHR13479:SF40">
    <property type="entry name" value="SMALL RIBOSOMAL SUBUNIT PROTEIN BS18M"/>
    <property type="match status" value="1"/>
</dbReference>
<dbReference type="Pfam" id="PF01084">
    <property type="entry name" value="Ribosomal_S18"/>
    <property type="match status" value="1"/>
</dbReference>
<dbReference type="PRINTS" id="PR00974">
    <property type="entry name" value="RIBOSOMALS18"/>
</dbReference>
<dbReference type="SUPFAM" id="SSF46911">
    <property type="entry name" value="Ribosomal protein S18"/>
    <property type="match status" value="1"/>
</dbReference>
<reference key="1">
    <citation type="journal article" date="2000" name="Mol. Gen. Genet.">
        <title>Complete nucleotide sequence of the Oenothera elata plastid chromosome, representing plastome I of the five distinguishable Euoenothera plastomes.</title>
        <authorList>
            <person name="Hupfer H."/>
            <person name="Swiatek M."/>
            <person name="Hornung S."/>
            <person name="Herrmann R.G."/>
            <person name="Maier R.M."/>
            <person name="Chiu W.-L."/>
            <person name="Sears B."/>
        </authorList>
    </citation>
    <scope>NUCLEOTIDE SEQUENCE [LARGE SCALE GENOMIC DNA]</scope>
    <source>
        <strain>cv. Johansen</strain>
    </source>
</reference>
<reference key="2">
    <citation type="journal article" date="2008" name="Nucleic Acids Res.">
        <title>The complete nucleotide sequences of the five genetically distinct plastid genomes of Oenothera, subsection Oenothera: I. Sequence evaluation and plastome evolution.</title>
        <authorList>
            <person name="Greiner S."/>
            <person name="Wang X."/>
            <person name="Rauwolf U."/>
            <person name="Silber M.V."/>
            <person name="Mayer K."/>
            <person name="Meurer J."/>
            <person name="Haberer G."/>
            <person name="Herrmann R.G."/>
        </authorList>
    </citation>
    <scope>SEQUENCE REVISION TO 67</scope>
</reference>
<feature type="chain" id="PRO_0000111298" description="Small ribosomal subunit protein bS18c">
    <location>
        <begin position="1"/>
        <end position="101"/>
    </location>
</feature>
<comment type="subunit">
    <text>Part of the 30S ribosomal subunit.</text>
</comment>
<comment type="subcellular location">
    <subcellularLocation>
        <location>Plastid</location>
        <location>Chloroplast</location>
    </subcellularLocation>
</comment>
<comment type="similarity">
    <text evidence="1">Belongs to the bacterial ribosomal protein bS18 family.</text>
</comment>
<geneLocation type="chloroplast"/>
<protein>
    <recommendedName>
        <fullName evidence="1">Small ribosomal subunit protein bS18c</fullName>
    </recommendedName>
    <alternativeName>
        <fullName evidence="2">30S ribosomal protein S18, chloroplastic</fullName>
    </alternativeName>
</protein>
<name>RR18_OENEH</name>
<proteinExistence type="inferred from homology"/>